<reference key="1">
    <citation type="submission" date="2007-04" db="EMBL/GenBank/DDBJ databases">
        <title>Complete sequence of Roseiflexus sp. RS-1.</title>
        <authorList>
            <consortium name="US DOE Joint Genome Institute"/>
            <person name="Copeland A."/>
            <person name="Lucas S."/>
            <person name="Lapidus A."/>
            <person name="Barry K."/>
            <person name="Detter J.C."/>
            <person name="Glavina del Rio T."/>
            <person name="Hammon N."/>
            <person name="Israni S."/>
            <person name="Dalin E."/>
            <person name="Tice H."/>
            <person name="Pitluck S."/>
            <person name="Chertkov O."/>
            <person name="Brettin T."/>
            <person name="Bruce D."/>
            <person name="Han C."/>
            <person name="Schmutz J."/>
            <person name="Larimer F."/>
            <person name="Land M."/>
            <person name="Hauser L."/>
            <person name="Kyrpides N."/>
            <person name="Mikhailova N."/>
            <person name="Bryant D.A."/>
            <person name="Richardson P."/>
        </authorList>
    </citation>
    <scope>NUCLEOTIDE SEQUENCE [LARGE SCALE GENOMIC DNA]</scope>
    <source>
        <strain>RS-1</strain>
    </source>
</reference>
<feature type="chain" id="PRO_1000046256" description="Large ribosomal subunit protein uL11">
    <location>
        <begin position="1"/>
        <end position="141"/>
    </location>
</feature>
<proteinExistence type="inferred from homology"/>
<keyword id="KW-0488">Methylation</keyword>
<keyword id="KW-0687">Ribonucleoprotein</keyword>
<keyword id="KW-0689">Ribosomal protein</keyword>
<keyword id="KW-0694">RNA-binding</keyword>
<keyword id="KW-0699">rRNA-binding</keyword>
<comment type="function">
    <text evidence="1">Forms part of the ribosomal stalk which helps the ribosome interact with GTP-bound translation factors.</text>
</comment>
<comment type="subunit">
    <text evidence="1">Part of the ribosomal stalk of the 50S ribosomal subunit. Interacts with L10 and the large rRNA to form the base of the stalk. L10 forms an elongated spine to which L12 dimers bind in a sequential fashion forming a multimeric L10(L12)X complex.</text>
</comment>
<comment type="PTM">
    <text evidence="1">One or more lysine residues are methylated.</text>
</comment>
<comment type="similarity">
    <text evidence="1">Belongs to the universal ribosomal protein uL11 family.</text>
</comment>
<gene>
    <name evidence="1" type="primary">rplK</name>
    <name type="ordered locus">RoseRS_3326</name>
</gene>
<sequence>MAKKVTGVVKLQLPAGKATPAPPVGPALGGYGINIMAFVKEYNEKTASQAGSVVPVEVTVYSDRSFTITLKTPPAADLLRKVAGIEKGSGTPNRKIAGTITKKQLRQVAEQKMADLNAFDIEAAEKIIAGTARSMGIKIVD</sequence>
<protein>
    <recommendedName>
        <fullName evidence="1">Large ribosomal subunit protein uL11</fullName>
    </recommendedName>
    <alternativeName>
        <fullName evidence="2">50S ribosomal protein L11</fullName>
    </alternativeName>
</protein>
<organism>
    <name type="scientific">Roseiflexus sp. (strain RS-1)</name>
    <dbReference type="NCBI Taxonomy" id="357808"/>
    <lineage>
        <taxon>Bacteria</taxon>
        <taxon>Bacillati</taxon>
        <taxon>Chloroflexota</taxon>
        <taxon>Chloroflexia</taxon>
        <taxon>Chloroflexales</taxon>
        <taxon>Roseiflexineae</taxon>
        <taxon>Roseiflexaceae</taxon>
        <taxon>Roseiflexus</taxon>
    </lineage>
</organism>
<name>RL11_ROSS1</name>
<accession>A5UYI4</accession>
<dbReference type="EMBL" id="CP000686">
    <property type="protein sequence ID" value="ABQ91687.1"/>
    <property type="molecule type" value="Genomic_DNA"/>
</dbReference>
<dbReference type="RefSeq" id="WP_011958030.1">
    <property type="nucleotide sequence ID" value="NC_009523.1"/>
</dbReference>
<dbReference type="SMR" id="A5UYI4"/>
<dbReference type="STRING" id="357808.RoseRS_3326"/>
<dbReference type="KEGG" id="rrs:RoseRS_3326"/>
<dbReference type="eggNOG" id="COG0080">
    <property type="taxonomic scope" value="Bacteria"/>
</dbReference>
<dbReference type="HOGENOM" id="CLU_074237_2_2_0"/>
<dbReference type="OrthoDB" id="9802408at2"/>
<dbReference type="Proteomes" id="UP000006554">
    <property type="component" value="Chromosome"/>
</dbReference>
<dbReference type="GO" id="GO:0022625">
    <property type="term" value="C:cytosolic large ribosomal subunit"/>
    <property type="evidence" value="ECO:0007669"/>
    <property type="project" value="TreeGrafter"/>
</dbReference>
<dbReference type="GO" id="GO:0070180">
    <property type="term" value="F:large ribosomal subunit rRNA binding"/>
    <property type="evidence" value="ECO:0007669"/>
    <property type="project" value="UniProtKB-UniRule"/>
</dbReference>
<dbReference type="GO" id="GO:0003735">
    <property type="term" value="F:structural constituent of ribosome"/>
    <property type="evidence" value="ECO:0007669"/>
    <property type="project" value="InterPro"/>
</dbReference>
<dbReference type="GO" id="GO:0006412">
    <property type="term" value="P:translation"/>
    <property type="evidence" value="ECO:0007669"/>
    <property type="project" value="UniProtKB-UniRule"/>
</dbReference>
<dbReference type="CDD" id="cd00349">
    <property type="entry name" value="Ribosomal_L11"/>
    <property type="match status" value="1"/>
</dbReference>
<dbReference type="FunFam" id="1.10.10.250:FF:000001">
    <property type="entry name" value="50S ribosomal protein L11"/>
    <property type="match status" value="1"/>
</dbReference>
<dbReference type="FunFam" id="3.30.1550.10:FF:000005">
    <property type="entry name" value="50S ribosomal protein L11"/>
    <property type="match status" value="1"/>
</dbReference>
<dbReference type="Gene3D" id="1.10.10.250">
    <property type="entry name" value="Ribosomal protein L11, C-terminal domain"/>
    <property type="match status" value="1"/>
</dbReference>
<dbReference type="Gene3D" id="3.30.1550.10">
    <property type="entry name" value="Ribosomal protein L11/L12, N-terminal domain"/>
    <property type="match status" value="1"/>
</dbReference>
<dbReference type="HAMAP" id="MF_00736">
    <property type="entry name" value="Ribosomal_uL11"/>
    <property type="match status" value="1"/>
</dbReference>
<dbReference type="InterPro" id="IPR000911">
    <property type="entry name" value="Ribosomal_uL11"/>
</dbReference>
<dbReference type="InterPro" id="IPR006519">
    <property type="entry name" value="Ribosomal_uL11_bac-typ"/>
</dbReference>
<dbReference type="InterPro" id="IPR020783">
    <property type="entry name" value="Ribosomal_uL11_C"/>
</dbReference>
<dbReference type="InterPro" id="IPR036769">
    <property type="entry name" value="Ribosomal_uL11_C_sf"/>
</dbReference>
<dbReference type="InterPro" id="IPR020785">
    <property type="entry name" value="Ribosomal_uL11_CS"/>
</dbReference>
<dbReference type="InterPro" id="IPR020784">
    <property type="entry name" value="Ribosomal_uL11_N"/>
</dbReference>
<dbReference type="InterPro" id="IPR036796">
    <property type="entry name" value="Ribosomal_uL11_N_sf"/>
</dbReference>
<dbReference type="NCBIfam" id="TIGR01632">
    <property type="entry name" value="L11_bact"/>
    <property type="match status" value="1"/>
</dbReference>
<dbReference type="PANTHER" id="PTHR11661">
    <property type="entry name" value="60S RIBOSOMAL PROTEIN L12"/>
    <property type="match status" value="1"/>
</dbReference>
<dbReference type="PANTHER" id="PTHR11661:SF1">
    <property type="entry name" value="LARGE RIBOSOMAL SUBUNIT PROTEIN UL11M"/>
    <property type="match status" value="1"/>
</dbReference>
<dbReference type="Pfam" id="PF00298">
    <property type="entry name" value="Ribosomal_L11"/>
    <property type="match status" value="1"/>
</dbReference>
<dbReference type="Pfam" id="PF03946">
    <property type="entry name" value="Ribosomal_L11_N"/>
    <property type="match status" value="1"/>
</dbReference>
<dbReference type="SMART" id="SM00649">
    <property type="entry name" value="RL11"/>
    <property type="match status" value="1"/>
</dbReference>
<dbReference type="SUPFAM" id="SSF54747">
    <property type="entry name" value="Ribosomal L11/L12e N-terminal domain"/>
    <property type="match status" value="1"/>
</dbReference>
<dbReference type="SUPFAM" id="SSF46906">
    <property type="entry name" value="Ribosomal protein L11, C-terminal domain"/>
    <property type="match status" value="1"/>
</dbReference>
<dbReference type="PROSITE" id="PS00359">
    <property type="entry name" value="RIBOSOMAL_L11"/>
    <property type="match status" value="1"/>
</dbReference>
<evidence type="ECO:0000255" key="1">
    <source>
        <dbReference type="HAMAP-Rule" id="MF_00736"/>
    </source>
</evidence>
<evidence type="ECO:0000305" key="2"/>